<protein>
    <recommendedName>
        <fullName>Sodium/sulfate cotransporter 1</fullName>
    </recommendedName>
    <alternativeName>
        <fullName>SAC1-like transporter 1</fullName>
        <shortName>CrSLT1</shortName>
    </alternativeName>
</protein>
<gene>
    <name type="primary">SLT1</name>
    <name type="ORF">CHLREDRAFT_205502</name>
</gene>
<keyword id="KW-1003">Cell membrane</keyword>
<keyword id="KW-0472">Membrane</keyword>
<keyword id="KW-0677">Repeat</keyword>
<keyword id="KW-0346">Stress response</keyword>
<keyword id="KW-0764">Sulfate transport</keyword>
<keyword id="KW-0769">Symport</keyword>
<keyword id="KW-0812">Transmembrane</keyword>
<keyword id="KW-1133">Transmembrane helix</keyword>
<keyword id="KW-0813">Transport</keyword>
<organism>
    <name type="scientific">Chlamydomonas reinhardtii</name>
    <name type="common">Chlamydomonas smithii</name>
    <dbReference type="NCBI Taxonomy" id="3055"/>
    <lineage>
        <taxon>Eukaryota</taxon>
        <taxon>Viridiplantae</taxon>
        <taxon>Chlorophyta</taxon>
        <taxon>core chlorophytes</taxon>
        <taxon>Chlorophyceae</taxon>
        <taxon>CS clade</taxon>
        <taxon>Chlamydomonadales</taxon>
        <taxon>Chlamydomonadaceae</taxon>
        <taxon>Chlamydomonas</taxon>
    </lineage>
</organism>
<name>SLT1_CHLRE</name>
<reference key="1">
    <citation type="journal article" date="2010" name="Plant Physiol.">
        <title>Identification and regulation of plasma membrane sulfate transporters in Chlamydomonas.</title>
        <authorList>
            <person name="Pootakham W."/>
            <person name="Gonzalez-Ballester D."/>
            <person name="Grossman A.R."/>
        </authorList>
    </citation>
    <scope>NUCLEOTIDE SEQUENCE [MRNA]</scope>
    <scope>FUNCTION</scope>
    <scope>INDUCTION BY SULFUR</scope>
    <scope>SUBCELLULAR LOCATION</scope>
    <scope>DISRUPTION PHENOTYPE</scope>
</reference>
<reference key="2">
    <citation type="journal article" date="2007" name="Science">
        <title>The Chlamydomonas genome reveals the evolution of key animal and plant functions.</title>
        <authorList>
            <person name="Merchant S.S."/>
            <person name="Prochnik S.E."/>
            <person name="Vallon O."/>
            <person name="Harris E.H."/>
            <person name="Karpowicz S.J."/>
            <person name="Witman G.B."/>
            <person name="Terry A."/>
            <person name="Salamov A."/>
            <person name="Fritz-Laylin L.K."/>
            <person name="Marechal-Drouard L."/>
            <person name="Marshall W.F."/>
            <person name="Qu L.H."/>
            <person name="Nelson D.R."/>
            <person name="Sanderfoot A.A."/>
            <person name="Spalding M.H."/>
            <person name="Kapitonov V.V."/>
            <person name="Ren Q."/>
            <person name="Ferris P."/>
            <person name="Lindquist E."/>
            <person name="Shapiro H."/>
            <person name="Lucas S.M."/>
            <person name="Grimwood J."/>
            <person name="Schmutz J."/>
            <person name="Cardol P."/>
            <person name="Cerutti H."/>
            <person name="Chanfreau G."/>
            <person name="Chen C.L."/>
            <person name="Cognat V."/>
            <person name="Croft M.T."/>
            <person name="Dent R."/>
            <person name="Dutcher S."/>
            <person name="Fernandez E."/>
            <person name="Fukuzawa H."/>
            <person name="Gonzalez-Ballester D."/>
            <person name="Gonzalez-Halphen D."/>
            <person name="Hallmann A."/>
            <person name="Hanikenne M."/>
            <person name="Hippler M."/>
            <person name="Inwood W."/>
            <person name="Jabbari K."/>
            <person name="Kalanon M."/>
            <person name="Kuras R."/>
            <person name="Lefebvre P.A."/>
            <person name="Lemaire S.D."/>
            <person name="Lobanov A.V."/>
            <person name="Lohr M."/>
            <person name="Manuell A."/>
            <person name="Meier I."/>
            <person name="Mets L."/>
            <person name="Mittag M."/>
            <person name="Mittelmeier T."/>
            <person name="Moroney J.V."/>
            <person name="Moseley J."/>
            <person name="Napoli C."/>
            <person name="Nedelcu A.M."/>
            <person name="Niyogi K."/>
            <person name="Novoselov S.V."/>
            <person name="Paulsen I.T."/>
            <person name="Pazour G.J."/>
            <person name="Purton S."/>
            <person name="Ral J.P."/>
            <person name="Riano-Pachon D.M."/>
            <person name="Riekhof W."/>
            <person name="Rymarquis L."/>
            <person name="Schroda M."/>
            <person name="Stern D."/>
            <person name="Umen J."/>
            <person name="Willows R."/>
            <person name="Wilson N."/>
            <person name="Zimmer S.L."/>
            <person name="Allmer J."/>
            <person name="Balk J."/>
            <person name="Bisova K."/>
            <person name="Chen C.J."/>
            <person name="Elias M."/>
            <person name="Gendler K."/>
            <person name="Hauser C."/>
            <person name="Lamb M.R."/>
            <person name="Ledford H."/>
            <person name="Long J.C."/>
            <person name="Minagawa J."/>
            <person name="Page M.D."/>
            <person name="Pan J."/>
            <person name="Pootakham W."/>
            <person name="Roje S."/>
            <person name="Rose A."/>
            <person name="Stahlberg E."/>
            <person name="Terauchi A.M."/>
            <person name="Yang P."/>
            <person name="Ball S."/>
            <person name="Bowler C."/>
            <person name="Dieckmann C.L."/>
            <person name="Gladyshev V.N."/>
            <person name="Green P."/>
            <person name="Jorgensen R."/>
            <person name="Mayfield S."/>
            <person name="Mueller-Roeber B."/>
            <person name="Rajamani S."/>
            <person name="Sayre R.T."/>
            <person name="Brokstein P."/>
            <person name="Dubchak I."/>
            <person name="Goodstein D."/>
            <person name="Hornick L."/>
            <person name="Huang Y.W."/>
            <person name="Jhaveri J."/>
            <person name="Luo Y."/>
            <person name="Martinez D."/>
            <person name="Ngau W.C."/>
            <person name="Otillar B."/>
            <person name="Poliakov A."/>
            <person name="Porter A."/>
            <person name="Szajkowski L."/>
            <person name="Werner G."/>
            <person name="Zhou K."/>
            <person name="Grigoriev I.V."/>
            <person name="Rokhsar D.S."/>
            <person name="Grossman A.R."/>
        </authorList>
    </citation>
    <scope>NUCLEOTIDE SEQUENCE [LARGE SCALE GENOMIC DNA]</scope>
    <source>
        <strain>CC-503</strain>
    </source>
</reference>
<reference key="3">
    <citation type="journal article" date="2008" name="Plant Physiol.">
        <title>The central role of a SNRK2 kinase in sulfur deprivation responses.</title>
        <authorList>
            <person name="Gonzalez-Ballester D."/>
            <person name="Pollock S.V."/>
            <person name="Pootakham W."/>
            <person name="Grossman A.R."/>
        </authorList>
    </citation>
    <scope>INDUCTION BY SULFUR</scope>
</reference>
<sequence length="881" mass="94832">MAALSWQGIVAVTFTALAFVVMAADWVGPDITFTVLLAFLTAFDGQIVTVAKAAAGYGNTGLLTVVFLYWVAEGITQTGGLELIMNYVLGRSRSVHWALVRSMFPVMVLSAFLNNTPCVTFMIPILISWGRRCGVPIKKLLIPLSYAAVLGGTCTSIGTSTNLVIVGLQDARYAKSKQVDQAKFQIFDIAPYGVPYALWGFVFILLAQGFLLPGNSSRYAKDLLLAVRVLPSSSVVKKKLKDSGLLQQNGFDVTAIYRNGQLIKISDPSIVLDGGDILYVSGELDVVEFVGEEYGLALVNQEQELAAERPFGSGEEAVFSANGAAPYHKLVQAKLSKTSDLIGRTVREVSWQGRFGLIPVAIQRGNGREDGRLSDVVLAAGDVLLLDTTPFYDEDREDIKTNFDGKLHAVKDGAAKEFVIGVKVKKSAEVVGKTVSAAGLRGIPGLFVLSVDHADGTSVDSSDYLYKIQPDDTIWIAADVAAVGFLSKFPGLELVQQEQVDKTGTSILYRHLVQAAVSHKGPLVGKTVRDVRFRTLYNAAVVAVHRENARIPLKVQDIVLQGGDVLLISCHTNWADEHRHDKSFVLVQPVPDSSPPKRSRMIIGVLLATGMVLTQIIGGLKNKEYIHLWPCAVLTAALMLLTGCMNADQTRKAIMWDVYLTIAAAFGVSAALEGTGVAAKFANAIISIGKGAGGTGAALIAIYIATALLSELLTNNAAGAIMYPIAAIAGDALKITPKDTSVAIMLGASAGFVNPFSYQTNLMVYAAGNYSVREFAIVGAPFQVWLMIVAGFILVYRNQWHQVWIVSWICTAGIVLLPALYFLLPTRIQIKIDGFFERIAAVLNPKAALERRRSLRRQVSHTRTDDSGSSGSPLPAPKIVA</sequence>
<accession>A8IJF8</accession>
<comment type="function">
    <text evidence="5">Na(+)/sulfate cotransporter with a probable high-affinity for sulfate and a proteasome dependent turnover.</text>
</comment>
<comment type="subcellular location">
    <subcellularLocation>
        <location evidence="5">Cell membrane</location>
        <topology evidence="5">Multi-pass membrane protein</topology>
    </subcellularLocation>
</comment>
<comment type="induction">
    <text evidence="4 5">Up-regulated by sulfur deprivation.</text>
</comment>
<comment type="disruption phenotype">
    <text evidence="5">No effect on sulfate uptake, due to the redundancy with SLT2 and SULTR2. Slt1 and slt2, as well as slt1 and sultr2 double mutants show a 50% decline in uptake while the slt1, slt2 and sultr2 triple mutant exhibits no increase in sulfate uptake capacity when deprived of sulfur.</text>
</comment>
<comment type="similarity">
    <text evidence="6">Belongs to the divalent anion:Na+ symporter (DASS) superfamily. Na+/sulfate symporter (TC 2.A.47.4) family.</text>
</comment>
<feature type="chain" id="PRO_0000417124" description="Sodium/sulfate cotransporter 1">
    <location>
        <begin position="1"/>
        <end position="881"/>
    </location>
</feature>
<feature type="transmembrane region" description="Helical" evidence="1">
    <location>
        <begin position="8"/>
        <end position="28"/>
    </location>
</feature>
<feature type="transmembrane region" description="Helical" evidence="1">
    <location>
        <begin position="31"/>
        <end position="51"/>
    </location>
</feature>
<feature type="transmembrane region" description="Helical" evidence="1">
    <location>
        <begin position="61"/>
        <end position="81"/>
    </location>
</feature>
<feature type="transmembrane region" description="Helical" evidence="1">
    <location>
        <begin position="107"/>
        <end position="127"/>
    </location>
</feature>
<feature type="transmembrane region" description="Helical" evidence="1">
    <location>
        <begin position="140"/>
        <end position="160"/>
    </location>
</feature>
<feature type="transmembrane region" description="Helical" evidence="1">
    <location>
        <begin position="186"/>
        <end position="206"/>
    </location>
</feature>
<feature type="transmembrane region" description="Helical" evidence="1">
    <location>
        <begin position="601"/>
        <end position="621"/>
    </location>
</feature>
<feature type="transmembrane region" description="Helical" evidence="1">
    <location>
        <begin position="625"/>
        <end position="645"/>
    </location>
</feature>
<feature type="transmembrane region" description="Helical" evidence="1">
    <location>
        <begin position="658"/>
        <end position="678"/>
    </location>
</feature>
<feature type="transmembrane region" description="Helical" evidence="1">
    <location>
        <begin position="684"/>
        <end position="704"/>
    </location>
</feature>
<feature type="transmembrane region" description="Helical" evidence="1">
    <location>
        <begin position="775"/>
        <end position="795"/>
    </location>
</feature>
<feature type="transmembrane region" description="Helical" evidence="1">
    <location>
        <begin position="803"/>
        <end position="823"/>
    </location>
</feature>
<feature type="domain" description="RCK C-terminal 1" evidence="2">
    <location>
        <begin position="212"/>
        <end position="296"/>
    </location>
</feature>
<feature type="domain" description="RCK C-terminal 2" evidence="2">
    <location>
        <begin position="318"/>
        <end position="402"/>
    </location>
</feature>
<feature type="domain" description="RCK C-terminal 3" evidence="2">
    <location>
        <begin position="407"/>
        <end position="492"/>
    </location>
</feature>
<feature type="domain" description="RCK C-terminal 4" evidence="2">
    <location>
        <begin position="498"/>
        <end position="584"/>
    </location>
</feature>
<feature type="region of interest" description="Disordered" evidence="3">
    <location>
        <begin position="854"/>
        <end position="881"/>
    </location>
</feature>
<proteinExistence type="evidence at transcript level"/>
<evidence type="ECO:0000255" key="1"/>
<evidence type="ECO:0000255" key="2">
    <source>
        <dbReference type="PROSITE-ProRule" id="PRU00544"/>
    </source>
</evidence>
<evidence type="ECO:0000256" key="3">
    <source>
        <dbReference type="SAM" id="MobiDB-lite"/>
    </source>
</evidence>
<evidence type="ECO:0000269" key="4">
    <source>
    </source>
</evidence>
<evidence type="ECO:0000269" key="5">
    <source>
    </source>
</evidence>
<evidence type="ECO:0000305" key="6"/>
<dbReference type="EMBL" id="GU181275">
    <property type="protein sequence ID" value="ACZ63168.1"/>
    <property type="molecule type" value="mRNA"/>
</dbReference>
<dbReference type="EMBL" id="DS496118">
    <property type="protein sequence ID" value="EDP05421.1"/>
    <property type="molecule type" value="Genomic_DNA"/>
</dbReference>
<dbReference type="RefSeq" id="XP_001690975.1">
    <property type="nucleotide sequence ID" value="XM_001690923.1"/>
</dbReference>
<dbReference type="TCDB" id="2.A.47.4.3">
    <property type="family name" value="the divalent anion:na(+) symporter (dass) family"/>
</dbReference>
<dbReference type="PaxDb" id="3055-EDP05421"/>
<dbReference type="EnsemblPlants" id="PNW74959">
    <property type="protein sequence ID" value="PNW74959"/>
    <property type="gene ID" value="CHLRE_12g502600v5"/>
</dbReference>
<dbReference type="GeneID" id="5716413"/>
<dbReference type="Gramene" id="PNW74959">
    <property type="protein sequence ID" value="PNW74959"/>
    <property type="gene ID" value="CHLRE_12g502600v5"/>
</dbReference>
<dbReference type="KEGG" id="cre:CHLRE_12g502600v5"/>
<dbReference type="eggNOG" id="ENOG502QPZM">
    <property type="taxonomic scope" value="Eukaryota"/>
</dbReference>
<dbReference type="HOGENOM" id="CLU_005170_6_0_1"/>
<dbReference type="OMA" id="SVGMAEF"/>
<dbReference type="OrthoDB" id="442352at2759"/>
<dbReference type="GO" id="GO:0005886">
    <property type="term" value="C:plasma membrane"/>
    <property type="evidence" value="ECO:0000314"/>
    <property type="project" value="UniProtKB"/>
</dbReference>
<dbReference type="GO" id="GO:0008324">
    <property type="term" value="F:monoatomic cation transmembrane transporter activity"/>
    <property type="evidence" value="ECO:0007669"/>
    <property type="project" value="InterPro"/>
</dbReference>
<dbReference type="GO" id="GO:0015116">
    <property type="term" value="F:sulfate transmembrane transporter activity"/>
    <property type="evidence" value="ECO:0000315"/>
    <property type="project" value="UniProtKB"/>
</dbReference>
<dbReference type="GO" id="GO:0015293">
    <property type="term" value="F:symporter activity"/>
    <property type="evidence" value="ECO:0007669"/>
    <property type="project" value="UniProtKB-KW"/>
</dbReference>
<dbReference type="GO" id="GO:0006813">
    <property type="term" value="P:potassium ion transport"/>
    <property type="evidence" value="ECO:0007669"/>
    <property type="project" value="InterPro"/>
</dbReference>
<dbReference type="FunFam" id="3.30.70.1450:FF:000009">
    <property type="entry name" value="SLC13 family permease"/>
    <property type="match status" value="2"/>
</dbReference>
<dbReference type="Gene3D" id="3.30.70.1450">
    <property type="entry name" value="Regulator of K+ conductance, C-terminal domain"/>
    <property type="match status" value="3"/>
</dbReference>
<dbReference type="InterPro" id="IPR004680">
    <property type="entry name" value="Cit_transptr-like_dom"/>
</dbReference>
<dbReference type="InterPro" id="IPR051679">
    <property type="entry name" value="DASS-Related_Transporters"/>
</dbReference>
<dbReference type="InterPro" id="IPR006037">
    <property type="entry name" value="RCK_C"/>
</dbReference>
<dbReference type="InterPro" id="IPR036721">
    <property type="entry name" value="RCK_C_sf"/>
</dbReference>
<dbReference type="PANTHER" id="PTHR43652">
    <property type="entry name" value="BASIC AMINO ACID ANTIPORTER YFCC-RELATED"/>
    <property type="match status" value="1"/>
</dbReference>
<dbReference type="PANTHER" id="PTHR43652:SF9">
    <property type="entry name" value="RCK C-TERMINAL DOMAIN-CONTAINING PROTEIN"/>
    <property type="match status" value="1"/>
</dbReference>
<dbReference type="Pfam" id="PF03600">
    <property type="entry name" value="CitMHS"/>
    <property type="match status" value="1"/>
</dbReference>
<dbReference type="Pfam" id="PF02080">
    <property type="entry name" value="TrkA_C"/>
    <property type="match status" value="3"/>
</dbReference>
<dbReference type="SUPFAM" id="SSF116726">
    <property type="entry name" value="TrkA C-terminal domain-like"/>
    <property type="match status" value="4"/>
</dbReference>
<dbReference type="PROSITE" id="PS51202">
    <property type="entry name" value="RCK_C"/>
    <property type="match status" value="4"/>
</dbReference>